<feature type="chain" id="PRO_0000067190" description="Putative ankyrin repeat protein R748">
    <location>
        <begin position="1"/>
        <end position="877"/>
    </location>
</feature>
<feature type="repeat" description="ANK 1">
    <location>
        <begin position="44"/>
        <end position="74"/>
    </location>
</feature>
<feature type="repeat" description="ANK 2">
    <location>
        <begin position="79"/>
        <end position="109"/>
    </location>
</feature>
<feature type="repeat" description="ANK 3">
    <location>
        <begin position="115"/>
        <end position="145"/>
    </location>
</feature>
<feature type="repeat" description="ANK 4">
    <location>
        <begin position="202"/>
        <end position="231"/>
    </location>
</feature>
<feature type="repeat" description="ANK 5">
    <location>
        <begin position="243"/>
        <end position="272"/>
    </location>
</feature>
<feature type="repeat" description="ANK 6">
    <location>
        <begin position="282"/>
        <end position="311"/>
    </location>
</feature>
<feature type="region of interest" description="Disordered" evidence="1">
    <location>
        <begin position="525"/>
        <end position="579"/>
    </location>
</feature>
<feature type="compositionally biased region" description="Low complexity" evidence="1">
    <location>
        <begin position="533"/>
        <end position="544"/>
    </location>
</feature>
<evidence type="ECO:0000256" key="1">
    <source>
        <dbReference type="SAM" id="MobiDB-lite"/>
    </source>
</evidence>
<gene>
    <name type="ordered locus">MIMI_R748</name>
</gene>
<reference key="1">
    <citation type="journal article" date="2004" name="Science">
        <title>The 1.2-megabase genome sequence of Mimivirus.</title>
        <authorList>
            <person name="Raoult D."/>
            <person name="Audic S."/>
            <person name="Robert C."/>
            <person name="Abergel C."/>
            <person name="Renesto P."/>
            <person name="Ogata H."/>
            <person name="La Scola B."/>
            <person name="Susan M."/>
            <person name="Claverie J.-M."/>
        </authorList>
    </citation>
    <scope>NUCLEOTIDE SEQUENCE [LARGE SCALE GENOMIC DNA]</scope>
    <source>
        <strain>Rowbotham-Bradford</strain>
    </source>
</reference>
<keyword id="KW-0040">ANK repeat</keyword>
<keyword id="KW-1185">Reference proteome</keyword>
<keyword id="KW-0677">Repeat</keyword>
<proteinExistence type="predicted"/>
<organism>
    <name type="scientific">Acanthamoeba polyphaga mimivirus</name>
    <name type="common">APMV</name>
    <dbReference type="NCBI Taxonomy" id="212035"/>
    <lineage>
        <taxon>Viruses</taxon>
        <taxon>Varidnaviria</taxon>
        <taxon>Bamfordvirae</taxon>
        <taxon>Nucleocytoviricota</taxon>
        <taxon>Megaviricetes</taxon>
        <taxon>Imitervirales</taxon>
        <taxon>Mimiviridae</taxon>
        <taxon>Megamimivirinae</taxon>
        <taxon>Mimivirus</taxon>
        <taxon>Mimivirus bradfordmassiliense</taxon>
    </lineage>
</organism>
<sequence length="877" mass="102285">MHNLENKNASNKKPKKIVVSDLIAILTYLMEIKNKMTNKELWKIRHICLTGSYNNNQMSIMKILMNKFPKTINVPFDKQNNTYLHQSIFNRHKIFVDFFMNELNDNINYRSKNKIGISHLHALVNYGYIDHIETAIIKDPGAIQQLSDDGQNILEFAVIPCFSIISNKNSEPYKKSNTTIINIIKTLSKSITKLDLQSRNKMGYRAIECAVRYCSTDVIDELISLGFSINESRLKNRIFPTINNNDLIGFATQIDRLDMVKHLINIGAPIHMYHINKHNKLLVPTCLVVAIKFKRDQCIHYLLNLPESIQALSNNTIKKYLFNIATNAGCTNHEIISKLCPKTYDDKKLRKNCNRYKISVFEQHENKIERNIKNYYKRRFMILDSISNMLSILCSIYNFSDNDSDLHKITRTVVSLEANLLLKYTTINNVYETVADFVDHIELTDIQYCFETVSNSEIMKASDCIINEYFISMKKLGIFKKINRLIKSKNIINTLLNEFDSDSESTDDDSDTKRACSCGCQSCYDSDEDPVCDSNESDNSNDINNHVKSDNKLNSSNDYYDEDDSEDNYNNQSDDEPLVKNDVVNTINTITPNQNLENTFNENNVMINNINFEKTLNNKHQSFQDNICENISENISEKIPNNNRDNNCNNNHNNNIQGDKELFDKPLHLQYTRLTKLHEHYIHKSLYKLRHPIKLNQYDTVYNLLTSLDPYVKNNNNILVFNSDNKLIAKIFSLSIKSDTDYINDINSENDNVNMYHEKTKLQIRSKPSRWIRFYSQNICGLDKQDPNHMFPFVLDRILNDWPCIERRIRDKIHPDGLDSLLYFYGELLINGEMIRGCFEYFINSNNSVFHRLFREEYKLPQNIRDTLDESINVLSY</sequence>
<name>YR748_MIMIV</name>
<accession>Q5UP04</accession>
<protein>
    <recommendedName>
        <fullName>Putative ankyrin repeat protein R748</fullName>
    </recommendedName>
</protein>
<organismHost>
    <name type="scientific">Acanthamoeba polyphaga</name>
    <name type="common">Amoeba</name>
    <dbReference type="NCBI Taxonomy" id="5757"/>
</organismHost>
<dbReference type="EMBL" id="AY653733">
    <property type="protein sequence ID" value="AAV51008.1"/>
    <property type="molecule type" value="Genomic_DNA"/>
</dbReference>
<dbReference type="SMR" id="Q5UP04"/>
<dbReference type="Proteomes" id="UP000001134">
    <property type="component" value="Genome"/>
</dbReference>
<dbReference type="Gene3D" id="1.25.40.20">
    <property type="entry name" value="Ankyrin repeat-containing domain"/>
    <property type="match status" value="1"/>
</dbReference>
<dbReference type="InterPro" id="IPR002110">
    <property type="entry name" value="Ankyrin_rpt"/>
</dbReference>
<dbReference type="InterPro" id="IPR036770">
    <property type="entry name" value="Ankyrin_rpt-contain_sf"/>
</dbReference>
<dbReference type="SMART" id="SM00248">
    <property type="entry name" value="ANK"/>
    <property type="match status" value="6"/>
</dbReference>
<dbReference type="SUPFAM" id="SSF48403">
    <property type="entry name" value="Ankyrin repeat"/>
    <property type="match status" value="1"/>
</dbReference>